<gene>
    <name evidence="1" type="primary">gcvPA</name>
    <name type="ordered locus">Caul_4384</name>
</gene>
<evidence type="ECO:0000255" key="1">
    <source>
        <dbReference type="HAMAP-Rule" id="MF_00712"/>
    </source>
</evidence>
<organism>
    <name type="scientific">Caulobacter sp. (strain K31)</name>
    <dbReference type="NCBI Taxonomy" id="366602"/>
    <lineage>
        <taxon>Bacteria</taxon>
        <taxon>Pseudomonadati</taxon>
        <taxon>Pseudomonadota</taxon>
        <taxon>Alphaproteobacteria</taxon>
        <taxon>Caulobacterales</taxon>
        <taxon>Caulobacteraceae</taxon>
        <taxon>Caulobacter</taxon>
    </lineage>
</organism>
<sequence>MRYLPLTPEDRADMLGVIGAETIDALFVDVPAVAYRKDPVDLPFHAGELEVEREMLALSRRNRSASEGPFFVGAGAYRHHVPATVDHIIQRSEFLTSYTPYQPEIAQGTLQVLFEFQTQVAALTGMEVANASLYDGSTATAEAVMMATRVTRRGKAVLSGGVHPHYVGTVETLAHAAGVATERLKAAIDAEDAVIAAIDADTACVVVQTPNVFGTATDVSKIAAAAQAAGALLIVVTTEAVSYGLLKSPGEMGADIVVAEGQSIGNGLNFGGPYVGLFACKEKYVRQAPGRLCGETVDADGRRGFVLTLSTREQHIRRDKATSNICTNSGLCALAFSIHMSLLGEKGLRQLALVNHHKAVKLRDALAAVPGVEVLTPRFFNEFAIKVPGNAAELVETLAANGVIGGVPFSRLDPGAGLDNVLLVAATETTPDSDIALFSKALSKVLAPKGSNQ</sequence>
<dbReference type="EC" id="1.4.4.2" evidence="1"/>
<dbReference type="EMBL" id="CP000927">
    <property type="protein sequence ID" value="ABZ73504.1"/>
    <property type="molecule type" value="Genomic_DNA"/>
</dbReference>
<dbReference type="SMR" id="B0T014"/>
<dbReference type="STRING" id="366602.Caul_4384"/>
<dbReference type="KEGG" id="cak:Caul_4384"/>
<dbReference type="eggNOG" id="COG0403">
    <property type="taxonomic scope" value="Bacteria"/>
</dbReference>
<dbReference type="HOGENOM" id="CLU_004620_0_2_5"/>
<dbReference type="OrthoDB" id="9801272at2"/>
<dbReference type="GO" id="GO:0004375">
    <property type="term" value="F:glycine dehydrogenase (decarboxylating) activity"/>
    <property type="evidence" value="ECO:0007669"/>
    <property type="project" value="UniProtKB-EC"/>
</dbReference>
<dbReference type="GO" id="GO:0019464">
    <property type="term" value="P:glycine decarboxylation via glycine cleavage system"/>
    <property type="evidence" value="ECO:0007669"/>
    <property type="project" value="UniProtKB-UniRule"/>
</dbReference>
<dbReference type="GO" id="GO:0009116">
    <property type="term" value="P:nucleoside metabolic process"/>
    <property type="evidence" value="ECO:0007669"/>
    <property type="project" value="InterPro"/>
</dbReference>
<dbReference type="Gene3D" id="3.90.1150.10">
    <property type="entry name" value="Aspartate Aminotransferase, domain 1"/>
    <property type="match status" value="1"/>
</dbReference>
<dbReference type="Gene3D" id="3.40.640.10">
    <property type="entry name" value="Type I PLP-dependent aspartate aminotransferase-like (Major domain)"/>
    <property type="match status" value="1"/>
</dbReference>
<dbReference type="HAMAP" id="MF_00712">
    <property type="entry name" value="GcvPA"/>
    <property type="match status" value="1"/>
</dbReference>
<dbReference type="InterPro" id="IPR023010">
    <property type="entry name" value="GcvPA"/>
</dbReference>
<dbReference type="InterPro" id="IPR049315">
    <property type="entry name" value="GDC-P_N"/>
</dbReference>
<dbReference type="InterPro" id="IPR015424">
    <property type="entry name" value="PyrdxlP-dep_Trfase"/>
</dbReference>
<dbReference type="InterPro" id="IPR015421">
    <property type="entry name" value="PyrdxlP-dep_Trfase_major"/>
</dbReference>
<dbReference type="InterPro" id="IPR015422">
    <property type="entry name" value="PyrdxlP-dep_Trfase_small"/>
</dbReference>
<dbReference type="NCBIfam" id="NF001696">
    <property type="entry name" value="PRK00451.1"/>
    <property type="match status" value="1"/>
</dbReference>
<dbReference type="PANTHER" id="PTHR42806">
    <property type="entry name" value="GLYCINE CLEAVAGE SYSTEM P-PROTEIN"/>
    <property type="match status" value="1"/>
</dbReference>
<dbReference type="PANTHER" id="PTHR42806:SF1">
    <property type="entry name" value="GLYCINE DEHYDROGENASE (DECARBOXYLATING)"/>
    <property type="match status" value="1"/>
</dbReference>
<dbReference type="Pfam" id="PF02347">
    <property type="entry name" value="GDC-P"/>
    <property type="match status" value="1"/>
</dbReference>
<dbReference type="PIRSF" id="PIRSF006815">
    <property type="entry name" value="GcvPA"/>
    <property type="match status" value="1"/>
</dbReference>
<dbReference type="SUPFAM" id="SSF53383">
    <property type="entry name" value="PLP-dependent transferases"/>
    <property type="match status" value="1"/>
</dbReference>
<accession>B0T014</accession>
<reference key="1">
    <citation type="submission" date="2008-01" db="EMBL/GenBank/DDBJ databases">
        <title>Complete sequence of chromosome of Caulobacter sp. K31.</title>
        <authorList>
            <consortium name="US DOE Joint Genome Institute"/>
            <person name="Copeland A."/>
            <person name="Lucas S."/>
            <person name="Lapidus A."/>
            <person name="Barry K."/>
            <person name="Glavina del Rio T."/>
            <person name="Dalin E."/>
            <person name="Tice H."/>
            <person name="Pitluck S."/>
            <person name="Bruce D."/>
            <person name="Goodwin L."/>
            <person name="Thompson L.S."/>
            <person name="Brettin T."/>
            <person name="Detter J.C."/>
            <person name="Han C."/>
            <person name="Schmutz J."/>
            <person name="Larimer F."/>
            <person name="Land M."/>
            <person name="Hauser L."/>
            <person name="Kyrpides N."/>
            <person name="Kim E."/>
            <person name="Stephens C."/>
            <person name="Richardson P."/>
        </authorList>
    </citation>
    <scope>NUCLEOTIDE SEQUENCE [LARGE SCALE GENOMIC DNA]</scope>
    <source>
        <strain>K31</strain>
    </source>
</reference>
<feature type="chain" id="PRO_1000083218" description="Probable glycine dehydrogenase (decarboxylating) subunit 1">
    <location>
        <begin position="1"/>
        <end position="453"/>
    </location>
</feature>
<name>GCSPA_CAUSK</name>
<proteinExistence type="inferred from homology"/>
<protein>
    <recommendedName>
        <fullName evidence="1">Probable glycine dehydrogenase (decarboxylating) subunit 1</fullName>
        <ecNumber evidence="1">1.4.4.2</ecNumber>
    </recommendedName>
    <alternativeName>
        <fullName evidence="1">Glycine cleavage system P-protein subunit 1</fullName>
    </alternativeName>
    <alternativeName>
        <fullName evidence="1">Glycine decarboxylase subunit 1</fullName>
    </alternativeName>
    <alternativeName>
        <fullName evidence="1">Glycine dehydrogenase (aminomethyl-transferring) subunit 1</fullName>
    </alternativeName>
</protein>
<keyword id="KW-0560">Oxidoreductase</keyword>
<comment type="function">
    <text evidence="1">The glycine cleavage system catalyzes the degradation of glycine. The P protein binds the alpha-amino group of glycine through its pyridoxal phosphate cofactor; CO(2) is released and the remaining methylamine moiety is then transferred to the lipoamide cofactor of the H protein.</text>
</comment>
<comment type="catalytic activity">
    <reaction evidence="1">
        <text>N(6)-[(R)-lipoyl]-L-lysyl-[glycine-cleavage complex H protein] + glycine + H(+) = N(6)-[(R)-S(8)-aminomethyldihydrolipoyl]-L-lysyl-[glycine-cleavage complex H protein] + CO2</text>
        <dbReference type="Rhea" id="RHEA:24304"/>
        <dbReference type="Rhea" id="RHEA-COMP:10494"/>
        <dbReference type="Rhea" id="RHEA-COMP:10495"/>
        <dbReference type="ChEBI" id="CHEBI:15378"/>
        <dbReference type="ChEBI" id="CHEBI:16526"/>
        <dbReference type="ChEBI" id="CHEBI:57305"/>
        <dbReference type="ChEBI" id="CHEBI:83099"/>
        <dbReference type="ChEBI" id="CHEBI:83143"/>
        <dbReference type="EC" id="1.4.4.2"/>
    </reaction>
</comment>
<comment type="subunit">
    <text evidence="1">The glycine cleavage system is composed of four proteins: P, T, L and H. In this organism, the P 'protein' is a heterodimer of two subunits.</text>
</comment>
<comment type="similarity">
    <text evidence="1">Belongs to the GcvP family. N-terminal subunit subfamily.</text>
</comment>